<feature type="initiator methionine" description="Removed" evidence="2">
    <location>
        <position position="1"/>
    </location>
</feature>
<feature type="chain" id="PRO_0000065766" description="Vasodilator-stimulated phosphoprotein">
    <location>
        <begin position="2"/>
        <end position="384"/>
    </location>
</feature>
<feature type="domain" description="WH1" evidence="5">
    <location>
        <begin position="2"/>
        <end position="113"/>
    </location>
</feature>
<feature type="repeat" description="1">
    <location>
        <begin position="348"/>
        <end position="362"/>
    </location>
</feature>
<feature type="repeat" description="2">
    <location>
        <begin position="363"/>
        <end position="377"/>
    </location>
</feature>
<feature type="region of interest" description="Disordered" evidence="6">
    <location>
        <begin position="112"/>
        <end position="350"/>
    </location>
</feature>
<feature type="region of interest" description="EVH2">
    <location>
        <begin position="228"/>
        <end position="381"/>
    </location>
</feature>
<feature type="region of interest" description="EVH2 block A">
    <location>
        <begin position="228"/>
        <end position="248"/>
    </location>
</feature>
<feature type="region of interest" description="EVH2 block B">
    <location>
        <begin position="262"/>
        <end position="281"/>
    </location>
</feature>
<feature type="region of interest" description="EVH2 block C">
    <location>
        <begin position="347"/>
        <end position="381"/>
    </location>
</feature>
<feature type="region of interest" description="2 X 15 AA tandem repeats of L-[EQ]-[KR] [MV]-K-[EQ]-E-[IL]-[IL]-E-[AEV]-[FV]-[KRV]-[KQ]-E">
    <location>
        <begin position="348"/>
        <end position="377"/>
    </location>
</feature>
<feature type="coiled-coil region" evidence="4">
    <location>
        <begin position="344"/>
        <end position="377"/>
    </location>
</feature>
<feature type="short sequence motif" description="KLKR">
    <location>
        <begin position="237"/>
        <end position="240"/>
    </location>
</feature>
<feature type="compositionally biased region" description="Pro residues" evidence="6">
    <location>
        <begin position="117"/>
        <end position="127"/>
    </location>
</feature>
<feature type="compositionally biased region" description="Pro residues" evidence="6">
    <location>
        <begin position="165"/>
        <end position="190"/>
    </location>
</feature>
<feature type="compositionally biased region" description="Low complexity" evidence="6">
    <location>
        <begin position="227"/>
        <end position="236"/>
    </location>
</feature>
<feature type="compositionally biased region" description="Polar residues" evidence="6">
    <location>
        <begin position="316"/>
        <end position="343"/>
    </location>
</feature>
<feature type="modified residue" description="N-acetylserine" evidence="2">
    <location>
        <position position="2"/>
    </location>
</feature>
<feature type="modified residue" description="Phosphotyrosine" evidence="2">
    <location>
        <position position="39"/>
    </location>
</feature>
<feature type="modified residue" description="Phosphoserine" evidence="2">
    <location>
        <position position="46"/>
    </location>
</feature>
<feature type="modified residue" description="Phosphoserine; by PKA, PKG/PRKG1, PKC and ROCK1" evidence="7">
    <location>
        <position position="160"/>
    </location>
</feature>
<feature type="modified residue" description="Phosphoserine; by PKA and PKG/PRKG1" evidence="2">
    <location>
        <position position="242"/>
    </location>
</feature>
<feature type="modified residue" description="Phosphothreonine; by PKA, PKG/PRKG1 and AMPK" evidence="2">
    <location>
        <position position="281"/>
    </location>
</feature>
<feature type="modified residue" description="N6-acetyllysine" evidence="2">
    <location>
        <position position="286"/>
    </location>
</feature>
<feature type="modified residue" description="Phosphoserine" evidence="2">
    <location>
        <position position="318"/>
    </location>
</feature>
<feature type="modified residue" description="Phosphothreonine" evidence="2">
    <location>
        <position position="320"/>
    </location>
</feature>
<feature type="modified residue" description="Phosphoserine; by AMPK" evidence="2">
    <location>
        <position position="326"/>
    </location>
</feature>
<feature type="modified residue" description="Phosphoserine" evidence="3">
    <location>
        <position position="327"/>
    </location>
</feature>
<feature type="modified residue" description="Phosphoserine" evidence="3">
    <location>
        <position position="329"/>
    </location>
</feature>
<proteinExistence type="evidence at protein level"/>
<organism>
    <name type="scientific">Canis lupus familiaris</name>
    <name type="common">Dog</name>
    <name type="synonym">Canis familiaris</name>
    <dbReference type="NCBI Taxonomy" id="9615"/>
    <lineage>
        <taxon>Eukaryota</taxon>
        <taxon>Metazoa</taxon>
        <taxon>Chordata</taxon>
        <taxon>Craniata</taxon>
        <taxon>Vertebrata</taxon>
        <taxon>Euteleostomi</taxon>
        <taxon>Mammalia</taxon>
        <taxon>Eutheria</taxon>
        <taxon>Laurasiatheria</taxon>
        <taxon>Carnivora</taxon>
        <taxon>Caniformia</taxon>
        <taxon>Canidae</taxon>
        <taxon>Canis</taxon>
    </lineage>
</organism>
<keyword id="KW-0007">Acetylation</keyword>
<keyword id="KW-0009">Actin-binding</keyword>
<keyword id="KW-0965">Cell junction</keyword>
<keyword id="KW-1003">Cell membrane</keyword>
<keyword id="KW-0966">Cell projection</keyword>
<keyword id="KW-0175">Coiled coil</keyword>
<keyword id="KW-0963">Cytoplasm</keyword>
<keyword id="KW-0206">Cytoskeleton</keyword>
<keyword id="KW-0472">Membrane</keyword>
<keyword id="KW-0597">Phosphoprotein</keyword>
<keyword id="KW-1185">Reference proteome</keyword>
<keyword id="KW-0677">Repeat</keyword>
<keyword id="KW-0729">SH3-binding</keyword>
<keyword id="KW-0796">Tight junction</keyword>
<dbReference type="EMBL" id="Z46388">
    <property type="protein sequence ID" value="CAA86522.1"/>
    <property type="molecule type" value="mRNA"/>
</dbReference>
<dbReference type="PIR" id="S51796">
    <property type="entry name" value="S51796"/>
</dbReference>
<dbReference type="RefSeq" id="NP_001003256.1">
    <property type="nucleotide sequence ID" value="NM_001003256.1"/>
</dbReference>
<dbReference type="SMR" id="P50551"/>
<dbReference type="BioGRID" id="139852">
    <property type="interactions" value="1"/>
</dbReference>
<dbReference type="FunCoup" id="P50551">
    <property type="interactions" value="498"/>
</dbReference>
<dbReference type="STRING" id="9615.ENSCAFP00000064684"/>
<dbReference type="iPTMnet" id="P50551"/>
<dbReference type="PaxDb" id="9612-ENSCAFP00000006594"/>
<dbReference type="GeneID" id="403936"/>
<dbReference type="KEGG" id="cfa:403936"/>
<dbReference type="CTD" id="7408"/>
<dbReference type="eggNOG" id="KOG4590">
    <property type="taxonomic scope" value="Eukaryota"/>
</dbReference>
<dbReference type="InParanoid" id="P50551"/>
<dbReference type="OrthoDB" id="31170at2759"/>
<dbReference type="Proteomes" id="UP000002254">
    <property type="component" value="Unplaced"/>
</dbReference>
<dbReference type="Proteomes" id="UP000694429">
    <property type="component" value="Unplaced"/>
</dbReference>
<dbReference type="Proteomes" id="UP000694542">
    <property type="component" value="Unplaced"/>
</dbReference>
<dbReference type="Proteomes" id="UP000805418">
    <property type="component" value="Unplaced"/>
</dbReference>
<dbReference type="GO" id="GO:0005923">
    <property type="term" value="C:bicellular tight junction"/>
    <property type="evidence" value="ECO:0007669"/>
    <property type="project" value="UniProtKB-SubCell"/>
</dbReference>
<dbReference type="GO" id="GO:0005737">
    <property type="term" value="C:cytoplasm"/>
    <property type="evidence" value="ECO:0007669"/>
    <property type="project" value="UniProtKB-SubCell"/>
</dbReference>
<dbReference type="GO" id="GO:0005856">
    <property type="term" value="C:cytoskeleton"/>
    <property type="evidence" value="ECO:0007669"/>
    <property type="project" value="UniProtKB-SubCell"/>
</dbReference>
<dbReference type="GO" id="GO:0031527">
    <property type="term" value="C:filopodium membrane"/>
    <property type="evidence" value="ECO:0007669"/>
    <property type="project" value="UniProtKB-SubCell"/>
</dbReference>
<dbReference type="GO" id="GO:0005925">
    <property type="term" value="C:focal adhesion"/>
    <property type="evidence" value="ECO:0000318"/>
    <property type="project" value="GO_Central"/>
</dbReference>
<dbReference type="GO" id="GO:0031258">
    <property type="term" value="C:lamellipodium membrane"/>
    <property type="evidence" value="ECO:0007669"/>
    <property type="project" value="UniProtKB-SubCell"/>
</dbReference>
<dbReference type="GO" id="GO:0005886">
    <property type="term" value="C:plasma membrane"/>
    <property type="evidence" value="ECO:0000318"/>
    <property type="project" value="GO_Central"/>
</dbReference>
<dbReference type="GO" id="GO:0003779">
    <property type="term" value="F:actin binding"/>
    <property type="evidence" value="ECO:0007669"/>
    <property type="project" value="UniProtKB-KW"/>
</dbReference>
<dbReference type="GO" id="GO:0005522">
    <property type="term" value="F:profilin binding"/>
    <property type="evidence" value="ECO:0000318"/>
    <property type="project" value="GO_Central"/>
</dbReference>
<dbReference type="GO" id="GO:0017124">
    <property type="term" value="F:SH3 domain binding"/>
    <property type="evidence" value="ECO:0007669"/>
    <property type="project" value="UniProtKB-KW"/>
</dbReference>
<dbReference type="GO" id="GO:0008154">
    <property type="term" value="P:actin polymerization or depolymerization"/>
    <property type="evidence" value="ECO:0000318"/>
    <property type="project" value="GO_Central"/>
</dbReference>
<dbReference type="GO" id="GO:0007411">
    <property type="term" value="P:axon guidance"/>
    <property type="evidence" value="ECO:0000318"/>
    <property type="project" value="GO_Central"/>
</dbReference>
<dbReference type="GO" id="GO:0001843">
    <property type="term" value="P:neural tube closure"/>
    <property type="evidence" value="ECO:0000318"/>
    <property type="project" value="GO_Central"/>
</dbReference>
<dbReference type="GO" id="GO:0030838">
    <property type="term" value="P:positive regulation of actin filament polymerization"/>
    <property type="evidence" value="ECO:0000318"/>
    <property type="project" value="GO_Central"/>
</dbReference>
<dbReference type="GO" id="GO:0051289">
    <property type="term" value="P:protein homotetramerization"/>
    <property type="evidence" value="ECO:0007669"/>
    <property type="project" value="InterPro"/>
</dbReference>
<dbReference type="CDD" id="cd01207">
    <property type="entry name" value="EVH1_Ena_VASP-like"/>
    <property type="match status" value="1"/>
</dbReference>
<dbReference type="CDD" id="cd22185">
    <property type="entry name" value="WH2_hVASP-like"/>
    <property type="match status" value="1"/>
</dbReference>
<dbReference type="FunFam" id="1.20.5.1160:FF:000005">
    <property type="entry name" value="vasodilator-stimulated phosphoprotein isoform X2"/>
    <property type="match status" value="1"/>
</dbReference>
<dbReference type="FunFam" id="2.30.29.30:FF:000047">
    <property type="entry name" value="vasodilator-stimulated phosphoprotein isoform X2"/>
    <property type="match status" value="1"/>
</dbReference>
<dbReference type="Gene3D" id="2.30.29.30">
    <property type="entry name" value="Pleckstrin-homology domain (PH domain)/Phosphotyrosine-binding domain (PTB)"/>
    <property type="match status" value="1"/>
</dbReference>
<dbReference type="Gene3D" id="1.20.5.1160">
    <property type="entry name" value="Vasodilator-stimulated phosphoprotein"/>
    <property type="match status" value="1"/>
</dbReference>
<dbReference type="InterPro" id="IPR011993">
    <property type="entry name" value="PH-like_dom_sf"/>
</dbReference>
<dbReference type="InterPro" id="IPR017354">
    <property type="entry name" value="VASP/EVL"/>
</dbReference>
<dbReference type="InterPro" id="IPR038023">
    <property type="entry name" value="VASP_sf"/>
</dbReference>
<dbReference type="InterPro" id="IPR014885">
    <property type="entry name" value="VASP_tetra"/>
</dbReference>
<dbReference type="InterPro" id="IPR000697">
    <property type="entry name" value="WH1/EVH1_dom"/>
</dbReference>
<dbReference type="PANTHER" id="PTHR11202">
    <property type="entry name" value="SPROUTY-RELATED, EVH1 DOMAIN-CONTAINING PROTEIN FAMILY MEMBER"/>
    <property type="match status" value="1"/>
</dbReference>
<dbReference type="PANTHER" id="PTHR11202:SF12">
    <property type="entry name" value="VASODILATOR-STIMULATED PHOSPHOPROTEIN"/>
    <property type="match status" value="1"/>
</dbReference>
<dbReference type="Pfam" id="PF08776">
    <property type="entry name" value="VASP_tetra"/>
    <property type="match status" value="1"/>
</dbReference>
<dbReference type="Pfam" id="PF00568">
    <property type="entry name" value="WH1"/>
    <property type="match status" value="1"/>
</dbReference>
<dbReference type="PIRSF" id="PIRSF038010">
    <property type="entry name" value="Vasodilator_Phospo"/>
    <property type="match status" value="1"/>
</dbReference>
<dbReference type="SMART" id="SM00461">
    <property type="entry name" value="WH1"/>
    <property type="match status" value="1"/>
</dbReference>
<dbReference type="SUPFAM" id="SSF50729">
    <property type="entry name" value="PH domain-like"/>
    <property type="match status" value="1"/>
</dbReference>
<dbReference type="SUPFAM" id="SSF118370">
    <property type="entry name" value="Vasodilator-stimulated phosphoprotein, VASP, tetramerisation domain"/>
    <property type="match status" value="1"/>
</dbReference>
<dbReference type="PROSITE" id="PS50229">
    <property type="entry name" value="WH1"/>
    <property type="match status" value="1"/>
</dbReference>
<evidence type="ECO:0000250" key="1"/>
<evidence type="ECO:0000250" key="2">
    <source>
        <dbReference type="UniProtKB" id="P50552"/>
    </source>
</evidence>
<evidence type="ECO:0000250" key="3">
    <source>
        <dbReference type="UniProtKB" id="P70460"/>
    </source>
</evidence>
<evidence type="ECO:0000255" key="4"/>
<evidence type="ECO:0000255" key="5">
    <source>
        <dbReference type="PROSITE-ProRule" id="PRU00410"/>
    </source>
</evidence>
<evidence type="ECO:0000256" key="6">
    <source>
        <dbReference type="SAM" id="MobiDB-lite"/>
    </source>
</evidence>
<evidence type="ECO:0000269" key="7">
    <source>
    </source>
</evidence>
<evidence type="ECO:0000305" key="8"/>
<sequence length="384" mass="40413">MSETVICSSWATVMLYDDSNKRWLPAGTGPQSFSRVQIYHNPTANSFRVVGWKMQPDQQVVINCAIVRGIKYNQATPTFHQWRDARQVWGLNFGSKEDATQFAAAMASALEALEGGGPPPPPPPAAPPTWSVQNGPASEEVEQQKRQQPGPPEHLERRVSNAGGPPAPPAGGPPPPPGPPPPPGPPPPPGVSLSGGSAAGHGAGGGPPPAPPLPTAQGTSGGGTGAPGLAAAIAGAKLRKVSKQEEASGGPPVPKAESTRSTGGGLMEEMNAMLARRRKATQVGEKPPKDESANEEPEARVPVPAQSETVRRPWEKNSTTLPRMKSSSSVTTSEAHPSTPSSSDESDLERVKQELLEEVRKELQKVKEEIIEAFVQELRKRGSP</sequence>
<gene>
    <name type="primary">VASP</name>
</gene>
<protein>
    <recommendedName>
        <fullName>Vasodilator-stimulated phosphoprotein</fullName>
        <shortName>VASP</shortName>
    </recommendedName>
</protein>
<reference key="1">
    <citation type="journal article" date="1995" name="EMBO J.">
        <title>Molecular cloning, structural analysis and functional expression of the proline-rich focal adhesion and microfilament-associated protein VASP.</title>
        <authorList>
            <person name="Haffner C."/>
            <person name="Jarchau T."/>
            <person name="Reinhard M."/>
            <person name="Hoppe J."/>
            <person name="Lohmann S.M."/>
            <person name="Walter U."/>
        </authorList>
    </citation>
    <scope>NUCLEOTIDE SEQUENCE [MRNA]</scope>
    <source>
        <strain>Cocker spaniel</strain>
        <tissue>Kidney</tissue>
    </source>
</reference>
<reference key="2">
    <citation type="journal article" date="2004" name="J. Cell Biol.">
        <title>Rab13 regulates PKA signaling during tight junction assembly.</title>
        <authorList>
            <person name="Koehler K."/>
            <person name="Louvard D."/>
            <person name="Zahraoui A."/>
        </authorList>
    </citation>
    <scope>SUBCELLULAR LOCATION</scope>
    <scope>PHOSPHORYLATION AT SER-160 BY PKA</scope>
</reference>
<name>VASP_CANLF</name>
<accession>P50551</accession>
<comment type="function">
    <text evidence="1">Ena/VASP proteins are actin-associated proteins involved in a range of processes dependent on cytoskeleton remodeling and cell polarity such as axon guidance, lamellipodial and filopodial dynamics, platelet activation and cell migration. VASP promotes actin filament elongation. It protects the barbed end of growing actin filaments against capping and increases the rate of actin polymerization in the presence of capping protein. VASP stimulates actin filament elongation by promoting the transfer of profilin-bound actin monomers onto the barbed end of growing actin filaments. Plays a role in actin-based mobility of Listeria monocytogenes in host cells. Regulates actin dynamics in platelets and plays an important role in regulating platelet aggregation (By similarity).</text>
</comment>
<comment type="subunit">
    <text evidence="1">Homotetramer. Interacts with PFN1, PFN2, LPP, ACTN1 and ACTG1. Interacts, via the EVH1 domain, with the Pro-rich regions of ZYX. This interaction is important for targeting to focal adhesions and the formation of actin-rich structures at the apical surface of cells. Interacts, via the EVH1 domain, with the Pro-rich domain of Listeria monocytogenes actA. Interacts with APBB1IP. Interacts, via the Pro-rich domain, with the C-terminal SH3 domain of DNMBP. Interacts weakly with MEFV (By similarity).</text>
</comment>
<comment type="subcellular location">
    <subcellularLocation>
        <location evidence="7">Cytoplasm</location>
    </subcellularLocation>
    <subcellularLocation>
        <location evidence="1">Cytoplasm</location>
        <location evidence="1">Cytoskeleton</location>
    </subcellularLocation>
    <subcellularLocation>
        <location evidence="1">Cell junction</location>
        <location evidence="1">Focal adhesion</location>
    </subcellularLocation>
    <subcellularLocation>
        <location evidence="7">Cell junction</location>
        <location evidence="7">Tight junction</location>
    </subcellularLocation>
    <subcellularLocation>
        <location evidence="1">Cell projection</location>
        <location evidence="1">Lamellipodium membrane</location>
    </subcellularLocation>
    <subcellularLocation>
        <location evidence="1">Cell projection</location>
        <location evidence="1">Filopodium membrane</location>
    </subcellularLocation>
    <text evidence="1">Targeted to stress fibers and focal adhesions through interaction with a number of proteins including MRL family members. Localizes to the plasma membrane in protruding lamellipodia and filopodial tips. Stimulation by thrombin or PMA, also translocates VASP to focal adhesions. Localized along the sides of actin filaments throughout the peripheral cytoplasm under basal conditions. In pre-apoptotic cells, colocalizes with MEFV in large specks (pyroptosomes) (By similarity).</text>
</comment>
<comment type="domain">
    <text>The EVH2 domain is comprised of 3 regions. Block A is a thymosin-like domain required for G-actin binding. The KLKR motif within this block is essential for the G-actin binding and for actin polymerization. Block B is required for F-actin binding and subcellular location, and Block C for tetramerization.</text>
</comment>
<comment type="domain">
    <text evidence="1">The WH1 domain mediates interaction with XIRP1.</text>
</comment>
<comment type="PTM">
    <text evidence="1">Major substrate for cAMP-dependent (PKA) and cGMP-dependent protein kinase (PKG) in platelets. The preferred site for PKA is Ser-160, the preferred site for PKG/PRKG1, Ser-242. In ADP-activated platelets, phosphorylation by PKA or PKG on Ser-160 leads to fibrinogen receptor inhibition. Phosphorylation on Thr-281 requires prior phosphorylation on Ser-160 and Ser-242. In response to phorbol ester (PMA) stimulation, phosphorylated by PKC/PRKCA. In response to thrombin, phosphorylated by both PKC and ROCK1. Phosphorylation at Thr-281 by AMPK does not require prior phosphorylation at Ser-160 or Ser-242. Phosphorylation at Ser-160 by PKA is required for localization to the tight junctions in epithelial cells. Phosphorylation modulates F-actin binding, actin filament elongation and platelet activation. Phosphorylation at Ser-326 by AMPK also alters actin filament binding. Carbon monoxide (CO) promotes phosphorylation at Ser-160, while nitric oxide (NO) promotes phosphorylation at Ser-160, but also at Ser-242 (By similarity).</text>
</comment>
<comment type="similarity">
    <text evidence="8">Belongs to the Ena/VASP family.</text>
</comment>